<reference key="1">
    <citation type="submission" date="1998-01" db="EMBL/GenBank/DDBJ databases">
        <title>A highly conserved nucleolar protein Cbf5p may be involved in the centromere DNA-binding activity of protein complex CBF3.</title>
        <authorList>
            <person name="Jiang W."/>
            <person name="Clifford J."/>
            <person name="Koltin Y."/>
        </authorList>
    </citation>
    <scope>NUCLEOTIDE SEQUENCE [MRNA]</scope>
</reference>
<reference key="2">
    <citation type="journal article" date="2005" name="Nature">
        <title>Genomic sequence of the pathogenic and allergenic filamentous fungus Aspergillus fumigatus.</title>
        <authorList>
            <person name="Nierman W.C."/>
            <person name="Pain A."/>
            <person name="Anderson M.J."/>
            <person name="Wortman J.R."/>
            <person name="Kim H.S."/>
            <person name="Arroyo J."/>
            <person name="Berriman M."/>
            <person name="Abe K."/>
            <person name="Archer D.B."/>
            <person name="Bermejo C."/>
            <person name="Bennett J.W."/>
            <person name="Bowyer P."/>
            <person name="Chen D."/>
            <person name="Collins M."/>
            <person name="Coulsen R."/>
            <person name="Davies R."/>
            <person name="Dyer P.S."/>
            <person name="Farman M.L."/>
            <person name="Fedorova N."/>
            <person name="Fedorova N.D."/>
            <person name="Feldblyum T.V."/>
            <person name="Fischer R."/>
            <person name="Fosker N."/>
            <person name="Fraser A."/>
            <person name="Garcia J.L."/>
            <person name="Garcia M.J."/>
            <person name="Goble A."/>
            <person name="Goldman G.H."/>
            <person name="Gomi K."/>
            <person name="Griffith-Jones S."/>
            <person name="Gwilliam R."/>
            <person name="Haas B.J."/>
            <person name="Haas H."/>
            <person name="Harris D.E."/>
            <person name="Horiuchi H."/>
            <person name="Huang J."/>
            <person name="Humphray S."/>
            <person name="Jimenez J."/>
            <person name="Keller N."/>
            <person name="Khouri H."/>
            <person name="Kitamoto K."/>
            <person name="Kobayashi T."/>
            <person name="Konzack S."/>
            <person name="Kulkarni R."/>
            <person name="Kumagai T."/>
            <person name="Lafton A."/>
            <person name="Latge J.-P."/>
            <person name="Li W."/>
            <person name="Lord A."/>
            <person name="Lu C."/>
            <person name="Majoros W.H."/>
            <person name="May G.S."/>
            <person name="Miller B.L."/>
            <person name="Mohamoud Y."/>
            <person name="Molina M."/>
            <person name="Monod M."/>
            <person name="Mouyna I."/>
            <person name="Mulligan S."/>
            <person name="Murphy L.D."/>
            <person name="O'Neil S."/>
            <person name="Paulsen I."/>
            <person name="Penalva M.A."/>
            <person name="Pertea M."/>
            <person name="Price C."/>
            <person name="Pritchard B.L."/>
            <person name="Quail M.A."/>
            <person name="Rabbinowitsch E."/>
            <person name="Rawlins N."/>
            <person name="Rajandream M.A."/>
            <person name="Reichard U."/>
            <person name="Renauld H."/>
            <person name="Robson G.D."/>
            <person name="Rodriguez de Cordoba S."/>
            <person name="Rodriguez-Pena J.M."/>
            <person name="Ronning C.M."/>
            <person name="Rutter S."/>
            <person name="Salzberg S.L."/>
            <person name="Sanchez M."/>
            <person name="Sanchez-Ferrero J.C."/>
            <person name="Saunders D."/>
            <person name="Seeger K."/>
            <person name="Squares R."/>
            <person name="Squares S."/>
            <person name="Takeuchi M."/>
            <person name="Tekaia F."/>
            <person name="Turner G."/>
            <person name="Vazquez de Aldana C.R."/>
            <person name="Weidman J."/>
            <person name="White O."/>
            <person name="Woodward J.R."/>
            <person name="Yu J.-H."/>
            <person name="Fraser C.M."/>
            <person name="Galagan J.E."/>
            <person name="Asai K."/>
            <person name="Machida M."/>
            <person name="Hall N."/>
            <person name="Barrell B.G."/>
            <person name="Denning D.W."/>
        </authorList>
    </citation>
    <scope>NUCLEOTIDE SEQUENCE [LARGE SCALE GENOMIC DNA]</scope>
    <source>
        <strain>ATCC MYA-4609 / CBS 101355 / FGSC A1100 / Af293</strain>
    </source>
</reference>
<comment type="function">
    <text evidence="1">Catalytic subunit of H/ACA small nucleolar ribonucleoprotein (H/ACA snoRNP) complex, which catalyzes pseudouridylation of rRNA. This involves the isomerization of uridine such that the ribose is subsequently attached to C5, instead of the normal N1. Pseudouridine ('psi') residues may serve to stabilize the conformation of rRNAs and play a central role in ribosomal RNA processing. The H/ACA snoRNP complex also mediates pseudouridylation of other types of RNAs. Catalyzes pseudouridylation at position 93 in U2 snRNA. Also catalyzes pseudouridylation of mRNAs; H/ACA-type snoRNAs probably guide pseudouridylation of mRNAs.</text>
</comment>
<comment type="catalytic activity">
    <reaction evidence="1">
        <text>uridine in 5S rRNA = pseudouridine in 5S rRNA</text>
        <dbReference type="Rhea" id="RHEA:47036"/>
        <dbReference type="Rhea" id="RHEA-COMP:11730"/>
        <dbReference type="Rhea" id="RHEA-COMP:11731"/>
        <dbReference type="ChEBI" id="CHEBI:65314"/>
        <dbReference type="ChEBI" id="CHEBI:65315"/>
    </reaction>
</comment>
<comment type="catalytic activity">
    <reaction evidence="1">
        <text>uridine in snRNA = pseudouridine in snRNA</text>
        <dbReference type="Rhea" id="RHEA:51124"/>
        <dbReference type="Rhea" id="RHEA-COMP:12891"/>
        <dbReference type="Rhea" id="RHEA-COMP:12892"/>
        <dbReference type="ChEBI" id="CHEBI:65314"/>
        <dbReference type="ChEBI" id="CHEBI:65315"/>
    </reaction>
</comment>
<comment type="catalytic activity">
    <reaction evidence="1">
        <text>a uridine in mRNA = a pseudouridine in mRNA</text>
        <dbReference type="Rhea" id="RHEA:56644"/>
        <dbReference type="Rhea" id="RHEA-COMP:14658"/>
        <dbReference type="Rhea" id="RHEA-COMP:14659"/>
        <dbReference type="ChEBI" id="CHEBI:65314"/>
        <dbReference type="ChEBI" id="CHEBI:65315"/>
    </reaction>
</comment>
<comment type="subunit">
    <text evidence="1">Component of the small nucleolar ribonucleoprotein particles containing H/ACA-type snoRNAs (H/ACA snoRNPs).</text>
</comment>
<comment type="subcellular location">
    <subcellularLocation>
        <location evidence="1">Nucleus</location>
        <location evidence="1">Nucleolus</location>
    </subcellularLocation>
</comment>
<comment type="similarity">
    <text evidence="5">Belongs to the pseudouridine synthase TruB family.</text>
</comment>
<sequence>MAVSVTKEEMDYTIKPEAGASNISTEDWPLLLKNYDKLMVRTGHFTPIPAGCSPLKRDLKSYISSGVINLDKPSNPSSHEVVAWMKRILRAEKTGHSGTLDPKVTGCLIVCIDRATRLVKSQQGAGKEYVCVIRLHDKIPGGEAQFKRALETLTGALFQRPPLISAVKRQLRIRTIHESKLYEFDNDRHLGVFWVSCEAGTYIRTLCVHLGLLLGVGAHMQELRRVRSGAMDENNGLVTLHDVLDAQWMYDNQRDESYLRRVIQPLESLLTTYKRIVVKDSAVNAVCYGAKLMIPGLLRFEAGIEVNEEVVLMTTKGEAIAIGIAQMSTVELSTCDHGVVAKVKRCIMERDLYPRRWGLGPVALEKKKLKSAGKLDKYGRANEDTPAKWKTEYKDYSAPEEASAHAASESTAKEDVAAALTTEQDEAPSSPQSKMDVDETKEEKKRKRHEGETAEERAERKRKKKEKKEKKERRKSKQEKEDSDDSD</sequence>
<organism>
    <name type="scientific">Aspergillus fumigatus (strain ATCC MYA-4609 / CBS 101355 / FGSC A1100 / Af293)</name>
    <name type="common">Neosartorya fumigata</name>
    <dbReference type="NCBI Taxonomy" id="330879"/>
    <lineage>
        <taxon>Eukaryota</taxon>
        <taxon>Fungi</taxon>
        <taxon>Dikarya</taxon>
        <taxon>Ascomycota</taxon>
        <taxon>Pezizomycotina</taxon>
        <taxon>Eurotiomycetes</taxon>
        <taxon>Eurotiomycetidae</taxon>
        <taxon>Eurotiales</taxon>
        <taxon>Aspergillaceae</taxon>
        <taxon>Aspergillus</taxon>
        <taxon>Aspergillus subgen. Fumigati</taxon>
    </lineage>
</organism>
<protein>
    <recommendedName>
        <fullName evidence="5">H/ACA ribonucleoprotein complex subunit cbf5</fullName>
        <ecNumber evidence="1">5.4.99.-</ecNumber>
    </recommendedName>
    <alternativeName>
        <fullName>Centromere-binding factor 5</fullName>
    </alternativeName>
    <alternativeName>
        <fullName>H/ACA snoRNP protein cbf5</fullName>
    </alternativeName>
    <alternativeName>
        <fullName>Small nucleolar RNP protein cbf5</fullName>
    </alternativeName>
</protein>
<gene>
    <name type="primary">cbf5</name>
    <name type="ORF">AFUA_5G05710</name>
</gene>
<feature type="chain" id="PRO_0000121977" description="H/ACA ribonucleoprotein complex subunit cbf5">
    <location>
        <begin position="1"/>
        <end position="487"/>
    </location>
</feature>
<feature type="domain" description="PUA" evidence="3">
    <location>
        <begin position="273"/>
        <end position="348"/>
    </location>
</feature>
<feature type="region of interest" description="Disordered" evidence="4">
    <location>
        <begin position="400"/>
        <end position="487"/>
    </location>
</feature>
<feature type="compositionally biased region" description="Low complexity" evidence="4">
    <location>
        <begin position="400"/>
        <end position="410"/>
    </location>
</feature>
<feature type="compositionally biased region" description="Basic and acidic residues" evidence="4">
    <location>
        <begin position="435"/>
        <end position="459"/>
    </location>
</feature>
<feature type="compositionally biased region" description="Basic residues" evidence="4">
    <location>
        <begin position="460"/>
        <end position="477"/>
    </location>
</feature>
<feature type="active site" description="Nucleophile" evidence="2">
    <location>
        <position position="101"/>
    </location>
</feature>
<dbReference type="EC" id="5.4.99.-" evidence="1"/>
<dbReference type="EMBL" id="U59150">
    <property type="protein sequence ID" value="AAB94298.1"/>
    <property type="molecule type" value="mRNA"/>
</dbReference>
<dbReference type="EMBL" id="AAHF01000003">
    <property type="protein sequence ID" value="EAL92023.1"/>
    <property type="molecule type" value="Genomic_DNA"/>
</dbReference>
<dbReference type="RefSeq" id="XP_754061.1">
    <property type="nucleotide sequence ID" value="XM_748968.1"/>
</dbReference>
<dbReference type="SMR" id="O43102"/>
<dbReference type="FunCoup" id="O43102">
    <property type="interactions" value="1518"/>
</dbReference>
<dbReference type="STRING" id="330879.O43102"/>
<dbReference type="EnsemblFungi" id="EAL92023">
    <property type="protein sequence ID" value="EAL92023"/>
    <property type="gene ID" value="AFUA_5G05710"/>
</dbReference>
<dbReference type="GeneID" id="3510768"/>
<dbReference type="KEGG" id="afm:AFUA_5G05710"/>
<dbReference type="VEuPathDB" id="FungiDB:Afu5g05710"/>
<dbReference type="HOGENOM" id="CLU_032087_3_2_1"/>
<dbReference type="InParanoid" id="O43102"/>
<dbReference type="OMA" id="KYGRTNE"/>
<dbReference type="OrthoDB" id="10250002at2759"/>
<dbReference type="Proteomes" id="UP000002530">
    <property type="component" value="Chromosome 5"/>
</dbReference>
<dbReference type="GO" id="GO:0031429">
    <property type="term" value="C:box H/ACA snoRNP complex"/>
    <property type="evidence" value="ECO:0000318"/>
    <property type="project" value="GO_Central"/>
</dbReference>
<dbReference type="GO" id="GO:0005874">
    <property type="term" value="C:microtubule"/>
    <property type="evidence" value="ECO:0007669"/>
    <property type="project" value="UniProtKB-KW"/>
</dbReference>
<dbReference type="GO" id="GO:0003677">
    <property type="term" value="F:DNA binding"/>
    <property type="evidence" value="ECO:0007669"/>
    <property type="project" value="UniProtKB-KW"/>
</dbReference>
<dbReference type="GO" id="GO:0009982">
    <property type="term" value="F:pseudouridine synthase activity"/>
    <property type="evidence" value="ECO:0000318"/>
    <property type="project" value="GO_Central"/>
</dbReference>
<dbReference type="GO" id="GO:0003723">
    <property type="term" value="F:RNA binding"/>
    <property type="evidence" value="ECO:0007669"/>
    <property type="project" value="UniProtKB-KW"/>
</dbReference>
<dbReference type="GO" id="GO:0106032">
    <property type="term" value="F:snRNA pseudouridine synthase activity"/>
    <property type="evidence" value="ECO:0007669"/>
    <property type="project" value="RHEA"/>
</dbReference>
<dbReference type="GO" id="GO:0000495">
    <property type="term" value="P:box H/ACA sno(s)RNA 3'-end processing"/>
    <property type="evidence" value="ECO:0000318"/>
    <property type="project" value="GO_Central"/>
</dbReference>
<dbReference type="GO" id="GO:1990481">
    <property type="term" value="P:mRNA pseudouridine synthesis"/>
    <property type="evidence" value="ECO:0000318"/>
    <property type="project" value="GO_Central"/>
</dbReference>
<dbReference type="GO" id="GO:0031118">
    <property type="term" value="P:rRNA pseudouridine synthesis"/>
    <property type="evidence" value="ECO:0000318"/>
    <property type="project" value="GO_Central"/>
</dbReference>
<dbReference type="GO" id="GO:0031120">
    <property type="term" value="P:snRNA pseudouridine synthesis"/>
    <property type="evidence" value="ECO:0000318"/>
    <property type="project" value="GO_Central"/>
</dbReference>
<dbReference type="CDD" id="cd02572">
    <property type="entry name" value="PseudoU_synth_hDyskerin"/>
    <property type="match status" value="1"/>
</dbReference>
<dbReference type="CDD" id="cd21148">
    <property type="entry name" value="PUA_Cbf5"/>
    <property type="match status" value="1"/>
</dbReference>
<dbReference type="FunFam" id="3.30.2350.10:FF:000001">
    <property type="entry name" value="H/ACA ribonucleoprotein complex subunit CBF5"/>
    <property type="match status" value="1"/>
</dbReference>
<dbReference type="Gene3D" id="3.30.2350.10">
    <property type="entry name" value="Pseudouridine synthase"/>
    <property type="match status" value="1"/>
</dbReference>
<dbReference type="Gene3D" id="2.30.130.10">
    <property type="entry name" value="PUA domain"/>
    <property type="match status" value="1"/>
</dbReference>
<dbReference type="InterPro" id="IPR012960">
    <property type="entry name" value="Dyskerin-like"/>
</dbReference>
<dbReference type="InterPro" id="IPR020103">
    <property type="entry name" value="PsdUridine_synth_cat_dom_sf"/>
</dbReference>
<dbReference type="InterPro" id="IPR002501">
    <property type="entry name" value="PsdUridine_synth_N"/>
</dbReference>
<dbReference type="InterPro" id="IPR002478">
    <property type="entry name" value="PUA"/>
</dbReference>
<dbReference type="InterPro" id="IPR015947">
    <property type="entry name" value="PUA-like_sf"/>
</dbReference>
<dbReference type="InterPro" id="IPR036974">
    <property type="entry name" value="PUA_sf"/>
</dbReference>
<dbReference type="InterPro" id="IPR004802">
    <property type="entry name" value="tRNA_PsdUridine_synth_B_fam"/>
</dbReference>
<dbReference type="InterPro" id="IPR032819">
    <property type="entry name" value="TruB_C"/>
</dbReference>
<dbReference type="InterPro" id="IPR004521">
    <property type="entry name" value="Uncharacterised_CHP00451"/>
</dbReference>
<dbReference type="NCBIfam" id="TIGR00425">
    <property type="entry name" value="CBF5"/>
    <property type="match status" value="1"/>
</dbReference>
<dbReference type="NCBIfam" id="NF003280">
    <property type="entry name" value="PRK04270.1"/>
    <property type="match status" value="1"/>
</dbReference>
<dbReference type="NCBIfam" id="TIGR00451">
    <property type="entry name" value="unchar_dom_2"/>
    <property type="match status" value="1"/>
</dbReference>
<dbReference type="PANTHER" id="PTHR23127">
    <property type="entry name" value="CENTROMERE/MICROTUBULE BINDING PROTEIN CBF5"/>
    <property type="match status" value="1"/>
</dbReference>
<dbReference type="PANTHER" id="PTHR23127:SF0">
    <property type="entry name" value="H_ACA RIBONUCLEOPROTEIN COMPLEX SUBUNIT DKC1"/>
    <property type="match status" value="1"/>
</dbReference>
<dbReference type="Pfam" id="PF08068">
    <property type="entry name" value="DKCLD"/>
    <property type="match status" value="1"/>
</dbReference>
<dbReference type="Pfam" id="PF01472">
    <property type="entry name" value="PUA"/>
    <property type="match status" value="1"/>
</dbReference>
<dbReference type="Pfam" id="PF16198">
    <property type="entry name" value="TruB_C_2"/>
    <property type="match status" value="1"/>
</dbReference>
<dbReference type="Pfam" id="PF01509">
    <property type="entry name" value="TruB_N"/>
    <property type="match status" value="1"/>
</dbReference>
<dbReference type="SMART" id="SM01136">
    <property type="entry name" value="DKCLD"/>
    <property type="match status" value="1"/>
</dbReference>
<dbReference type="SMART" id="SM00359">
    <property type="entry name" value="PUA"/>
    <property type="match status" value="1"/>
</dbReference>
<dbReference type="SUPFAM" id="SSF55120">
    <property type="entry name" value="Pseudouridine synthase"/>
    <property type="match status" value="1"/>
</dbReference>
<dbReference type="SUPFAM" id="SSF88697">
    <property type="entry name" value="PUA domain-like"/>
    <property type="match status" value="1"/>
</dbReference>
<dbReference type="PROSITE" id="PS50890">
    <property type="entry name" value="PUA"/>
    <property type="match status" value="1"/>
</dbReference>
<keyword id="KW-0238">DNA-binding</keyword>
<keyword id="KW-0413">Isomerase</keyword>
<keyword id="KW-0493">Microtubule</keyword>
<keyword id="KW-0539">Nucleus</keyword>
<keyword id="KW-1185">Reference proteome</keyword>
<keyword id="KW-0677">Repeat</keyword>
<keyword id="KW-0687">Ribonucleoprotein</keyword>
<keyword id="KW-0690">Ribosome biogenesis</keyword>
<keyword id="KW-0694">RNA-binding</keyword>
<keyword id="KW-0698">rRNA processing</keyword>
<proteinExistence type="evidence at transcript level"/>
<accession>O43102</accession>
<accession>Q4WTQ3</accession>
<evidence type="ECO:0000250" key="1">
    <source>
        <dbReference type="UniProtKB" id="P33322"/>
    </source>
</evidence>
<evidence type="ECO:0000250" key="2">
    <source>
        <dbReference type="UniProtKB" id="P60340"/>
    </source>
</evidence>
<evidence type="ECO:0000255" key="3">
    <source>
        <dbReference type="PROSITE-ProRule" id="PRU00161"/>
    </source>
</evidence>
<evidence type="ECO:0000256" key="4">
    <source>
        <dbReference type="SAM" id="MobiDB-lite"/>
    </source>
</evidence>
<evidence type="ECO:0000305" key="5"/>
<name>CBF5_ASPFU</name>